<sequence length="363" mass="40430">MSSDLKQTPLYQNYVDRGAKIVEFGGWAMPVQFSSIKEEHNAARYEIGLFDVSHMGEIEVTGKDASQFVQYLLSNDTDNLTTSKALYTALCNEEGGVIDDLVIYKLADDNYLLVVNAANTEKDFNWILKHKEKFDVEVQNVSNQYGQLAIQGPKARDLINQLVDEDVTEMKMFEFKQGVKLFAANVILSQSGYTGEDGFEIYCNIDDTEKIWDGLLEYNVMPCGLGARDTLRLEAGLPLHGQDLTESITPYEGGIAFASKPLIDADFIGKSVLKDQKENGAPRRTVGLELLEKGIARTGYEVMDLDGNIIGEVTSGTQSPSSGKSIALAMIKRDEFEMGRELLVQVRKRQLKAKIVKKNQIDK</sequence>
<dbReference type="EC" id="2.1.2.10" evidence="1"/>
<dbReference type="EMBL" id="AJ938182">
    <property type="protein sequence ID" value="CAI81098.1"/>
    <property type="molecule type" value="Genomic_DNA"/>
</dbReference>
<dbReference type="RefSeq" id="WP_000093341.1">
    <property type="nucleotide sequence ID" value="NC_007622.1"/>
</dbReference>
<dbReference type="SMR" id="Q2YSZ2"/>
<dbReference type="KEGG" id="sab:SAB1409c"/>
<dbReference type="HOGENOM" id="CLU_007884_10_2_9"/>
<dbReference type="GO" id="GO:0005829">
    <property type="term" value="C:cytosol"/>
    <property type="evidence" value="ECO:0007669"/>
    <property type="project" value="TreeGrafter"/>
</dbReference>
<dbReference type="GO" id="GO:0005960">
    <property type="term" value="C:glycine cleavage complex"/>
    <property type="evidence" value="ECO:0007669"/>
    <property type="project" value="InterPro"/>
</dbReference>
<dbReference type="GO" id="GO:0004047">
    <property type="term" value="F:aminomethyltransferase activity"/>
    <property type="evidence" value="ECO:0007669"/>
    <property type="project" value="UniProtKB-UniRule"/>
</dbReference>
<dbReference type="GO" id="GO:0008483">
    <property type="term" value="F:transaminase activity"/>
    <property type="evidence" value="ECO:0007669"/>
    <property type="project" value="UniProtKB-KW"/>
</dbReference>
<dbReference type="GO" id="GO:0019464">
    <property type="term" value="P:glycine decarboxylation via glycine cleavage system"/>
    <property type="evidence" value="ECO:0007669"/>
    <property type="project" value="UniProtKB-UniRule"/>
</dbReference>
<dbReference type="FunFam" id="2.40.30.110:FF:000007">
    <property type="entry name" value="Aminomethyltransferase"/>
    <property type="match status" value="1"/>
</dbReference>
<dbReference type="FunFam" id="3.30.70.1400:FF:000001">
    <property type="entry name" value="Aminomethyltransferase"/>
    <property type="match status" value="1"/>
</dbReference>
<dbReference type="FunFam" id="4.10.1250.10:FF:000001">
    <property type="entry name" value="Aminomethyltransferase"/>
    <property type="match status" value="1"/>
</dbReference>
<dbReference type="Gene3D" id="2.40.30.110">
    <property type="entry name" value="Aminomethyltransferase beta-barrel domains"/>
    <property type="match status" value="1"/>
</dbReference>
<dbReference type="Gene3D" id="3.30.70.1400">
    <property type="entry name" value="Aminomethyltransferase beta-barrel domains"/>
    <property type="match status" value="1"/>
</dbReference>
<dbReference type="Gene3D" id="4.10.1250.10">
    <property type="entry name" value="Aminomethyltransferase fragment"/>
    <property type="match status" value="1"/>
</dbReference>
<dbReference type="Gene3D" id="3.30.1360.120">
    <property type="entry name" value="Probable tRNA modification gtpase trme, domain 1"/>
    <property type="match status" value="1"/>
</dbReference>
<dbReference type="HAMAP" id="MF_00259">
    <property type="entry name" value="GcvT"/>
    <property type="match status" value="1"/>
</dbReference>
<dbReference type="InterPro" id="IPR006223">
    <property type="entry name" value="GCS_T"/>
</dbReference>
<dbReference type="InterPro" id="IPR022903">
    <property type="entry name" value="GCS_T_bac"/>
</dbReference>
<dbReference type="InterPro" id="IPR013977">
    <property type="entry name" value="GCST_C"/>
</dbReference>
<dbReference type="InterPro" id="IPR006222">
    <property type="entry name" value="GCV_T_N"/>
</dbReference>
<dbReference type="InterPro" id="IPR028896">
    <property type="entry name" value="GcvT/YgfZ/DmdA"/>
</dbReference>
<dbReference type="InterPro" id="IPR029043">
    <property type="entry name" value="GcvT/YgfZ_C"/>
</dbReference>
<dbReference type="InterPro" id="IPR027266">
    <property type="entry name" value="TrmE/GcvT_dom1"/>
</dbReference>
<dbReference type="NCBIfam" id="TIGR00528">
    <property type="entry name" value="gcvT"/>
    <property type="match status" value="1"/>
</dbReference>
<dbReference type="NCBIfam" id="NF001567">
    <property type="entry name" value="PRK00389.1"/>
    <property type="match status" value="1"/>
</dbReference>
<dbReference type="PANTHER" id="PTHR43757">
    <property type="entry name" value="AMINOMETHYLTRANSFERASE"/>
    <property type="match status" value="1"/>
</dbReference>
<dbReference type="PANTHER" id="PTHR43757:SF2">
    <property type="entry name" value="AMINOMETHYLTRANSFERASE, MITOCHONDRIAL"/>
    <property type="match status" value="1"/>
</dbReference>
<dbReference type="Pfam" id="PF01571">
    <property type="entry name" value="GCV_T"/>
    <property type="match status" value="1"/>
</dbReference>
<dbReference type="Pfam" id="PF08669">
    <property type="entry name" value="GCV_T_C"/>
    <property type="match status" value="1"/>
</dbReference>
<dbReference type="PIRSF" id="PIRSF006487">
    <property type="entry name" value="GcvT"/>
    <property type="match status" value="1"/>
</dbReference>
<dbReference type="SUPFAM" id="SSF101790">
    <property type="entry name" value="Aminomethyltransferase beta-barrel domain"/>
    <property type="match status" value="1"/>
</dbReference>
<dbReference type="SUPFAM" id="SSF103025">
    <property type="entry name" value="Folate-binding domain"/>
    <property type="match status" value="1"/>
</dbReference>
<reference key="1">
    <citation type="journal article" date="2007" name="PLoS ONE">
        <title>Molecular correlates of host specialization in Staphylococcus aureus.</title>
        <authorList>
            <person name="Herron-Olson L."/>
            <person name="Fitzgerald J.R."/>
            <person name="Musser J.M."/>
            <person name="Kapur V."/>
        </authorList>
    </citation>
    <scope>NUCLEOTIDE SEQUENCE [LARGE SCALE GENOMIC DNA]</scope>
    <source>
        <strain>bovine RF122 / ET3-1</strain>
    </source>
</reference>
<protein>
    <recommendedName>
        <fullName evidence="1">Aminomethyltransferase</fullName>
        <ecNumber evidence="1">2.1.2.10</ecNumber>
    </recommendedName>
    <alternativeName>
        <fullName evidence="1">Glycine cleavage system T protein</fullName>
    </alternativeName>
</protein>
<organism>
    <name type="scientific">Staphylococcus aureus (strain bovine RF122 / ET3-1)</name>
    <dbReference type="NCBI Taxonomy" id="273036"/>
    <lineage>
        <taxon>Bacteria</taxon>
        <taxon>Bacillati</taxon>
        <taxon>Bacillota</taxon>
        <taxon>Bacilli</taxon>
        <taxon>Bacillales</taxon>
        <taxon>Staphylococcaceae</taxon>
        <taxon>Staphylococcus</taxon>
    </lineage>
</organism>
<evidence type="ECO:0000255" key="1">
    <source>
        <dbReference type="HAMAP-Rule" id="MF_00259"/>
    </source>
</evidence>
<feature type="chain" id="PRO_1000047716" description="Aminomethyltransferase">
    <location>
        <begin position="1"/>
        <end position="363"/>
    </location>
</feature>
<name>GCST_STAAB</name>
<gene>
    <name evidence="1" type="primary">gcvT</name>
    <name type="ordered locus">SAB1409c</name>
</gene>
<proteinExistence type="inferred from homology"/>
<accession>Q2YSZ2</accession>
<comment type="function">
    <text evidence="1">The glycine cleavage system catalyzes the degradation of glycine.</text>
</comment>
<comment type="catalytic activity">
    <reaction evidence="1">
        <text>N(6)-[(R)-S(8)-aminomethyldihydrolipoyl]-L-lysyl-[protein] + (6S)-5,6,7,8-tetrahydrofolate = N(6)-[(R)-dihydrolipoyl]-L-lysyl-[protein] + (6R)-5,10-methylene-5,6,7,8-tetrahydrofolate + NH4(+)</text>
        <dbReference type="Rhea" id="RHEA:16945"/>
        <dbReference type="Rhea" id="RHEA-COMP:10475"/>
        <dbReference type="Rhea" id="RHEA-COMP:10492"/>
        <dbReference type="ChEBI" id="CHEBI:15636"/>
        <dbReference type="ChEBI" id="CHEBI:28938"/>
        <dbReference type="ChEBI" id="CHEBI:57453"/>
        <dbReference type="ChEBI" id="CHEBI:83100"/>
        <dbReference type="ChEBI" id="CHEBI:83143"/>
        <dbReference type="EC" id="2.1.2.10"/>
    </reaction>
</comment>
<comment type="subunit">
    <text evidence="1">The glycine cleavage system is composed of four proteins: P, T, L and H.</text>
</comment>
<comment type="similarity">
    <text evidence="1">Belongs to the GcvT family.</text>
</comment>
<keyword id="KW-0032">Aminotransferase</keyword>
<keyword id="KW-0808">Transferase</keyword>